<proteinExistence type="evidence at protein level"/>
<accession>P0C5D2</accession>
<sequence length="154" mass="17491">MVDVAFVCLGNICRSPMAEAIMRQRLKDRNIHDIKVHSRGTGSWNLGEPPHEGTQKILNKHNIPFDGMISELFEATDDFDYIVAMDQSNVDNIKSINPNLKGQLFKLLEFSNMEESDVPDPYYTNNFEGVYDMVLSSCDNLIDYIVKDANLKEG</sequence>
<comment type="function">
    <text evidence="1">Secreted tyrosine phosphatase that plays a critical role during infection as a bacterial effector protein that counteracts host defenses. Required for intramacrophage survival.</text>
</comment>
<comment type="catalytic activity">
    <reaction evidence="3">
        <text>O-phospho-L-tyrosyl-[protein] + H2O = L-tyrosyl-[protein] + phosphate</text>
        <dbReference type="Rhea" id="RHEA:10684"/>
        <dbReference type="Rhea" id="RHEA-COMP:10136"/>
        <dbReference type="Rhea" id="RHEA-COMP:20101"/>
        <dbReference type="ChEBI" id="CHEBI:15377"/>
        <dbReference type="ChEBI" id="CHEBI:43474"/>
        <dbReference type="ChEBI" id="CHEBI:46858"/>
        <dbReference type="ChEBI" id="CHEBI:61978"/>
        <dbReference type="EC" id="3.1.3.48"/>
    </reaction>
</comment>
<comment type="activity regulation">
    <text evidence="3">Inhibited by N-ethylmaleimide and sodium orthovanadate.</text>
</comment>
<comment type="biophysicochemical properties">
    <kinetics>
        <KM evidence="3">1.2 mM for p-nitrophenyl-phosphate (at pH 6.2 and 37 degrees Celsius)</KM>
        <Vmax evidence="3">33.6 umol/min/mg enzyme (at pH 6.2 and 37 degrees Celsius)</Vmax>
    </kinetics>
    <phDependence>
        <text evidence="3">Optimum pH is 6.2.</text>
    </phDependence>
    <temperatureDependence>
        <text evidence="3">Optimum temperature is about 40 degrees Celsius.</text>
    </temperatureDependence>
</comment>
<comment type="subunit">
    <text evidence="1">Interacts with host CORO1A.</text>
</comment>
<comment type="subcellular location">
    <subcellularLocation>
        <location evidence="1">Secreted</location>
    </subcellularLocation>
    <text evidence="1">Secreted intracellularly upon bacterial infection of macrophages.</text>
</comment>
<comment type="PTM">
    <text evidence="1">Phosphorylations at Tyr-122 and Tyr-123 are essential for phosphatase activity.</text>
</comment>
<comment type="similarity">
    <text evidence="4">Belongs to the low molecular weight phosphotyrosine protein phosphatase family.</text>
</comment>
<feature type="chain" id="PRO_0000300656" description="Low molecular weight protein-tyrosine-phosphatase PtpA">
    <location>
        <begin position="1"/>
        <end position="154"/>
    </location>
</feature>
<feature type="active site" description="Nucleophile" evidence="2">
    <location>
        <position position="8"/>
    </location>
</feature>
<feature type="active site" evidence="2">
    <location>
        <position position="14"/>
    </location>
</feature>
<feature type="active site" description="Proton donor" evidence="2">
    <location>
        <position position="120"/>
    </location>
</feature>
<feature type="strand" evidence="5">
    <location>
        <begin position="2"/>
        <end position="13"/>
    </location>
</feature>
<feature type="helix" evidence="5">
    <location>
        <begin position="14"/>
        <end position="28"/>
    </location>
</feature>
<feature type="strand" evidence="5">
    <location>
        <begin position="33"/>
        <end position="40"/>
    </location>
</feature>
<feature type="helix" evidence="5">
    <location>
        <begin position="52"/>
        <end position="60"/>
    </location>
</feature>
<feature type="strand" evidence="5">
    <location>
        <begin position="80"/>
        <end position="86"/>
    </location>
</feature>
<feature type="helix" evidence="5">
    <location>
        <begin position="87"/>
        <end position="96"/>
    </location>
</feature>
<feature type="strand" evidence="5">
    <location>
        <begin position="102"/>
        <end position="106"/>
    </location>
</feature>
<feature type="helix" evidence="5">
    <location>
        <begin position="107"/>
        <end position="110"/>
    </location>
</feature>
<feature type="helix" evidence="5">
    <location>
        <begin position="121"/>
        <end position="124"/>
    </location>
</feature>
<feature type="helix" evidence="5">
    <location>
        <begin position="127"/>
        <end position="148"/>
    </location>
</feature>
<keyword id="KW-0002">3D-structure</keyword>
<keyword id="KW-0378">Hydrolase</keyword>
<keyword id="KW-0597">Phosphoprotein</keyword>
<keyword id="KW-0904">Protein phosphatase</keyword>
<keyword id="KW-0964">Secreted</keyword>
<protein>
    <recommendedName>
        <fullName>Low molecular weight protein-tyrosine-phosphatase PtpA</fullName>
        <ecNumber>3.1.3.48</ecNumber>
    </recommendedName>
    <alternativeName>
        <fullName>Phosphotyrosine phosphatase A</fullName>
        <shortName>PTPase A</shortName>
    </alternativeName>
</protein>
<reference key="1">
    <citation type="journal article" date="2002" name="J. Bacteriol.">
        <title>Staphylococcus aureus contains two low-molecular-mass phosphotyrosine protein phosphatases.</title>
        <authorList>
            <person name="Soulat D."/>
            <person name="Vaganay E."/>
            <person name="Duclos B."/>
            <person name="Genestier A.-L."/>
            <person name="Etienne J."/>
            <person name="Cozzone A.J."/>
        </authorList>
    </citation>
    <scope>NUCLEOTIDE SEQUENCE [GENOMIC DNA]</scope>
    <scope>CHARACTERIZATION</scope>
    <scope>CATALYTIC ACTIVITY</scope>
    <scope>ACTIVITY REGULATION</scope>
    <scope>BIOPHYSICOCHEMICAL PROPERTIES</scope>
    <source>
        <strain>Reynolds</strain>
    </source>
</reference>
<reference key="2">
    <citation type="journal article" date="2011" name="J. Mol. Biol.">
        <title>Structure and substrate recognition of the Staphylococcus aureus protein tyrosine phosphatase PtpA.</title>
        <authorList>
            <person name="Vega C."/>
            <person name="Chou S."/>
            <person name="Engel K."/>
            <person name="Harrell M.E."/>
            <person name="Rajagopal L."/>
            <person name="Grundner C."/>
        </authorList>
    </citation>
    <scope>X-RAY CRYSTALLOGRAPHY (1.03 ANGSTROMS) OF 1-152</scope>
</reference>
<organism>
    <name type="scientific">Staphylococcus aureus</name>
    <dbReference type="NCBI Taxonomy" id="1280"/>
    <lineage>
        <taxon>Bacteria</taxon>
        <taxon>Bacillati</taxon>
        <taxon>Bacillota</taxon>
        <taxon>Bacilli</taxon>
        <taxon>Bacillales</taxon>
        <taxon>Staphylococcaceae</taxon>
        <taxon>Staphylococcus</taxon>
    </lineage>
</organism>
<name>PTPA_STAAU</name>
<gene>
    <name type="primary">ptpA</name>
</gene>
<dbReference type="EC" id="3.1.3.48"/>
<dbReference type="RefSeq" id="WP_000228666.1">
    <property type="nucleotide sequence ID" value="NZ_WYDB01000009.1"/>
</dbReference>
<dbReference type="PDB" id="3ROF">
    <property type="method" value="X-ray"/>
    <property type="resolution" value="1.03 A"/>
    <property type="chains" value="A=1-152"/>
</dbReference>
<dbReference type="PDBsum" id="3ROF"/>
<dbReference type="SMR" id="P0C5D2"/>
<dbReference type="OMA" id="VCHGNIC"/>
<dbReference type="EvolutionaryTrace" id="P0C5D2"/>
<dbReference type="GO" id="GO:0005576">
    <property type="term" value="C:extracellular region"/>
    <property type="evidence" value="ECO:0007669"/>
    <property type="project" value="UniProtKB-SubCell"/>
</dbReference>
<dbReference type="GO" id="GO:0004725">
    <property type="term" value="F:protein tyrosine phosphatase activity"/>
    <property type="evidence" value="ECO:0007669"/>
    <property type="project" value="UniProtKB-EC"/>
</dbReference>
<dbReference type="CDD" id="cd16343">
    <property type="entry name" value="LMWPTP"/>
    <property type="match status" value="1"/>
</dbReference>
<dbReference type="FunFam" id="3.40.50.2300:FF:000268">
    <property type="entry name" value="Low molecular weight protein-tyrosine-phosphatase PtpA"/>
    <property type="match status" value="1"/>
</dbReference>
<dbReference type="Gene3D" id="3.40.50.2300">
    <property type="match status" value="1"/>
</dbReference>
<dbReference type="InterPro" id="IPR050438">
    <property type="entry name" value="LMW_PTPase"/>
</dbReference>
<dbReference type="InterPro" id="IPR023485">
    <property type="entry name" value="Ptyr_pPase"/>
</dbReference>
<dbReference type="InterPro" id="IPR036196">
    <property type="entry name" value="Ptyr_pPase_sf"/>
</dbReference>
<dbReference type="InterPro" id="IPR017867">
    <property type="entry name" value="Tyr_phospatase_low_mol_wt"/>
</dbReference>
<dbReference type="PANTHER" id="PTHR11717:SF7">
    <property type="entry name" value="LOW MOLECULAR WEIGHT PHOSPHOTYROSINE PROTEIN PHOSPHATASE"/>
    <property type="match status" value="1"/>
</dbReference>
<dbReference type="PANTHER" id="PTHR11717">
    <property type="entry name" value="LOW MOLECULAR WEIGHT PROTEIN TYROSINE PHOSPHATASE"/>
    <property type="match status" value="1"/>
</dbReference>
<dbReference type="Pfam" id="PF01451">
    <property type="entry name" value="LMWPc"/>
    <property type="match status" value="1"/>
</dbReference>
<dbReference type="PRINTS" id="PR00719">
    <property type="entry name" value="LMWPTPASE"/>
</dbReference>
<dbReference type="SMART" id="SM00226">
    <property type="entry name" value="LMWPc"/>
    <property type="match status" value="1"/>
</dbReference>
<dbReference type="SUPFAM" id="SSF52788">
    <property type="entry name" value="Phosphotyrosine protein phosphatases I"/>
    <property type="match status" value="1"/>
</dbReference>
<evidence type="ECO:0000250" key="1">
    <source>
        <dbReference type="UniProtKB" id="A0A0H3K9F2"/>
    </source>
</evidence>
<evidence type="ECO:0000250" key="2">
    <source>
        <dbReference type="UniProtKB" id="P11064"/>
    </source>
</evidence>
<evidence type="ECO:0000269" key="3">
    <source>
    </source>
</evidence>
<evidence type="ECO:0000305" key="4"/>
<evidence type="ECO:0007829" key="5">
    <source>
        <dbReference type="PDB" id="3ROF"/>
    </source>
</evidence>